<feature type="chain" id="PRO_0000402619" description="Pyrimidine monooxygenase RutA">
    <location>
        <begin position="1"/>
        <end position="363"/>
    </location>
</feature>
<feature type="binding site" evidence="1">
    <location>
        <begin position="49"/>
        <end position="50"/>
    </location>
    <ligand>
        <name>FMN</name>
        <dbReference type="ChEBI" id="CHEBI:58210"/>
    </ligand>
</feature>
<feature type="binding site" evidence="1">
    <location>
        <position position="115"/>
    </location>
    <ligand>
        <name>FMN</name>
        <dbReference type="ChEBI" id="CHEBI:58210"/>
    </ligand>
</feature>
<feature type="binding site" evidence="1">
    <location>
        <position position="124"/>
    </location>
    <ligand>
        <name>FMN</name>
        <dbReference type="ChEBI" id="CHEBI:58210"/>
    </ligand>
</feature>
<feature type="binding site" evidence="1">
    <location>
        <begin position="140"/>
        <end position="141"/>
    </location>
    <ligand>
        <name>FMN</name>
        <dbReference type="ChEBI" id="CHEBI:58210"/>
    </ligand>
</feature>
<feature type="binding site" evidence="1">
    <location>
        <position position="190"/>
    </location>
    <ligand>
        <name>FMN</name>
        <dbReference type="ChEBI" id="CHEBI:58210"/>
    </ligand>
</feature>
<comment type="function">
    <text evidence="1">Catalyzes the pyrimidine ring opening between N-3 and C-4 by an unusual flavin hydroperoxide-catalyzed mechanism, adding oxygen atoms in the process to yield ureidoacrylate peracid, that immediately reacts with FMN forming ureidoacrylate and FMN-N(5)-oxide. The FMN-N(5)-oxide reacts spontaneously with NADH to produce FMN. Requires the flavin reductase RutF to regenerate FMN in vivo.</text>
</comment>
<comment type="catalytic activity">
    <reaction evidence="1">
        <text>uracil + FMNH2 + NADH + O2 = (Z)-3-ureidoacrylate + FMN + NAD(+) + H2O + H(+)</text>
        <dbReference type="Rhea" id="RHEA:31587"/>
        <dbReference type="ChEBI" id="CHEBI:15377"/>
        <dbReference type="ChEBI" id="CHEBI:15378"/>
        <dbReference type="ChEBI" id="CHEBI:15379"/>
        <dbReference type="ChEBI" id="CHEBI:17568"/>
        <dbReference type="ChEBI" id="CHEBI:57540"/>
        <dbReference type="ChEBI" id="CHEBI:57618"/>
        <dbReference type="ChEBI" id="CHEBI:57945"/>
        <dbReference type="ChEBI" id="CHEBI:58210"/>
        <dbReference type="ChEBI" id="CHEBI:59891"/>
        <dbReference type="EC" id="1.14.99.46"/>
    </reaction>
</comment>
<comment type="catalytic activity">
    <reaction evidence="1">
        <text>thymine + FMNH2 + NADH + O2 = (Z)-2-methylureidoacrylate + FMN + NAD(+) + H2O + H(+)</text>
        <dbReference type="Rhea" id="RHEA:31599"/>
        <dbReference type="ChEBI" id="CHEBI:15377"/>
        <dbReference type="ChEBI" id="CHEBI:15378"/>
        <dbReference type="ChEBI" id="CHEBI:15379"/>
        <dbReference type="ChEBI" id="CHEBI:17821"/>
        <dbReference type="ChEBI" id="CHEBI:57540"/>
        <dbReference type="ChEBI" id="CHEBI:57618"/>
        <dbReference type="ChEBI" id="CHEBI:57945"/>
        <dbReference type="ChEBI" id="CHEBI:58210"/>
        <dbReference type="ChEBI" id="CHEBI:143783"/>
        <dbReference type="EC" id="1.14.99.46"/>
    </reaction>
</comment>
<comment type="induction">
    <text evidence="1">Up-regulated by the nitrogen regulatory protein C (NtrC also called GlnG) and repressed by RutR.</text>
</comment>
<comment type="similarity">
    <text evidence="1">Belongs to the NtaA/SnaA/DszA monooxygenase family. RutA subfamily.</text>
</comment>
<dbReference type="EC" id="1.14.99.46" evidence="1"/>
<dbReference type="EMBL" id="CP000247">
    <property type="protein sequence ID" value="ABG69024.1"/>
    <property type="molecule type" value="Genomic_DNA"/>
</dbReference>
<dbReference type="RefSeq" id="WP_001313729.1">
    <property type="nucleotide sequence ID" value="NC_008253.1"/>
</dbReference>
<dbReference type="SMR" id="Q0TJ55"/>
<dbReference type="KEGG" id="ecp:ECP_1011"/>
<dbReference type="HOGENOM" id="CLU_027853_1_1_6"/>
<dbReference type="Proteomes" id="UP000009182">
    <property type="component" value="Chromosome"/>
</dbReference>
<dbReference type="GO" id="GO:0008726">
    <property type="term" value="F:alkanesulfonate monooxygenase activity"/>
    <property type="evidence" value="ECO:0007669"/>
    <property type="project" value="TreeGrafter"/>
</dbReference>
<dbReference type="GO" id="GO:0052614">
    <property type="term" value="F:uracil oxygenase activity"/>
    <property type="evidence" value="ECO:0007669"/>
    <property type="project" value="UniProtKB-EC"/>
</dbReference>
<dbReference type="GO" id="GO:0046306">
    <property type="term" value="P:alkanesulfonate catabolic process"/>
    <property type="evidence" value="ECO:0007669"/>
    <property type="project" value="TreeGrafter"/>
</dbReference>
<dbReference type="GO" id="GO:0019740">
    <property type="term" value="P:nitrogen utilization"/>
    <property type="evidence" value="ECO:0007669"/>
    <property type="project" value="UniProtKB-UniRule"/>
</dbReference>
<dbReference type="GO" id="GO:0006212">
    <property type="term" value="P:uracil catabolic process"/>
    <property type="evidence" value="ECO:0007669"/>
    <property type="project" value="UniProtKB-UniRule"/>
</dbReference>
<dbReference type="CDD" id="cd01094">
    <property type="entry name" value="Alkanesulfonate_monoxygenase"/>
    <property type="match status" value="1"/>
</dbReference>
<dbReference type="FunFam" id="3.20.20.30:FF:000003">
    <property type="entry name" value="Pyrimidine monooxygenase RutA"/>
    <property type="match status" value="1"/>
</dbReference>
<dbReference type="Gene3D" id="3.20.20.30">
    <property type="entry name" value="Luciferase-like domain"/>
    <property type="match status" value="1"/>
</dbReference>
<dbReference type="HAMAP" id="MF_01699">
    <property type="entry name" value="RutA"/>
    <property type="match status" value="1"/>
</dbReference>
<dbReference type="InterPro" id="IPR011251">
    <property type="entry name" value="Luciferase-like_dom"/>
</dbReference>
<dbReference type="InterPro" id="IPR036661">
    <property type="entry name" value="Luciferase-like_sf"/>
</dbReference>
<dbReference type="InterPro" id="IPR019914">
    <property type="entry name" value="Pyrimidine_monooxygenase_RutA"/>
</dbReference>
<dbReference type="InterPro" id="IPR050172">
    <property type="entry name" value="SsuD_RutA_monooxygenase"/>
</dbReference>
<dbReference type="NCBIfam" id="TIGR03612">
    <property type="entry name" value="RutA"/>
    <property type="match status" value="1"/>
</dbReference>
<dbReference type="PANTHER" id="PTHR42847">
    <property type="entry name" value="ALKANESULFONATE MONOOXYGENASE"/>
    <property type="match status" value="1"/>
</dbReference>
<dbReference type="PANTHER" id="PTHR42847:SF4">
    <property type="entry name" value="ALKANESULFONATE MONOOXYGENASE-RELATED"/>
    <property type="match status" value="1"/>
</dbReference>
<dbReference type="Pfam" id="PF00296">
    <property type="entry name" value="Bac_luciferase"/>
    <property type="match status" value="1"/>
</dbReference>
<dbReference type="SUPFAM" id="SSF51679">
    <property type="entry name" value="Bacterial luciferase-like"/>
    <property type="match status" value="1"/>
</dbReference>
<sequence>MKIGVFVPIGNNGWLISTHAPQYMPTFELNKAIVQKAEHYHFDFALSMIKLRGFGGKTEFWDHNLESFTLMAGLAAVTSRIQIYATAATLTLPPAIVARMAATIDSISGGRFGVNLVTGWQKPEYEQMGIWPGDDYFSRRYDYLTEYVQVLRDLWGSGKSDFKGDFFTMDDCRVSPQPSVPMKVICAGQSDAGMAFSARYADFNFCFGKGVNTPTAFAPTAARMKQAAEQTGRDVGSYVLFMVIADETDDAARAKWEHYKAGADEEALSWLTEQSQKDTRSGTDTNVRQMADPTSAVNINMGTLVGSYASVARMLDEVASVPGAEGVLLTFDDFLSGIETFGERIQPLMQCRAHLPALTQEVA</sequence>
<reference key="1">
    <citation type="journal article" date="2006" name="Mol. Microbiol.">
        <title>Role of pathogenicity island-associated integrases in the genome plasticity of uropathogenic Escherichia coli strain 536.</title>
        <authorList>
            <person name="Hochhut B."/>
            <person name="Wilde C."/>
            <person name="Balling G."/>
            <person name="Middendorf B."/>
            <person name="Dobrindt U."/>
            <person name="Brzuszkiewicz E."/>
            <person name="Gottschalk G."/>
            <person name="Carniel E."/>
            <person name="Hacker J."/>
        </authorList>
    </citation>
    <scope>NUCLEOTIDE SEQUENCE [LARGE SCALE GENOMIC DNA]</scope>
    <source>
        <strain>536 / UPEC</strain>
    </source>
</reference>
<accession>Q0TJ55</accession>
<proteinExistence type="inferred from homology"/>
<evidence type="ECO:0000255" key="1">
    <source>
        <dbReference type="HAMAP-Rule" id="MF_01699"/>
    </source>
</evidence>
<protein>
    <recommendedName>
        <fullName evidence="1">Pyrimidine monooxygenase RutA</fullName>
        <ecNumber evidence="1">1.14.99.46</ecNumber>
    </recommendedName>
</protein>
<keyword id="KW-0285">Flavoprotein</keyword>
<keyword id="KW-0288">FMN</keyword>
<keyword id="KW-0503">Monooxygenase</keyword>
<keyword id="KW-0521">NADP</keyword>
<keyword id="KW-0560">Oxidoreductase</keyword>
<organism>
    <name type="scientific">Escherichia coli O6:K15:H31 (strain 536 / UPEC)</name>
    <dbReference type="NCBI Taxonomy" id="362663"/>
    <lineage>
        <taxon>Bacteria</taxon>
        <taxon>Pseudomonadati</taxon>
        <taxon>Pseudomonadota</taxon>
        <taxon>Gammaproteobacteria</taxon>
        <taxon>Enterobacterales</taxon>
        <taxon>Enterobacteriaceae</taxon>
        <taxon>Escherichia</taxon>
    </lineage>
</organism>
<gene>
    <name evidence="1" type="primary">rutA</name>
    <name type="ordered locus">ECP_1011</name>
</gene>
<name>RUTA_ECOL5</name>